<feature type="chain" id="PRO_0000145439" description="DNA topoisomerase 4 subunit B">
    <location>
        <begin position="1"/>
        <end position="663"/>
    </location>
</feature>
<feature type="domain" description="Toprim" evidence="1">
    <location>
        <begin position="424"/>
        <end position="538"/>
    </location>
</feature>
<feature type="region of interest" description="Disordered" evidence="2">
    <location>
        <begin position="386"/>
        <end position="416"/>
    </location>
</feature>
<feature type="compositionally biased region" description="Basic and acidic residues" evidence="2">
    <location>
        <begin position="387"/>
        <end position="398"/>
    </location>
</feature>
<feature type="binding site" evidence="1">
    <location>
        <position position="7"/>
    </location>
    <ligand>
        <name>ATP</name>
        <dbReference type="ChEBI" id="CHEBI:30616"/>
    </ligand>
</feature>
<feature type="binding site" evidence="1">
    <location>
        <position position="47"/>
    </location>
    <ligand>
        <name>ATP</name>
        <dbReference type="ChEBI" id="CHEBI:30616"/>
    </ligand>
</feature>
<feature type="binding site" evidence="1">
    <location>
        <position position="74"/>
    </location>
    <ligand>
        <name>ATP</name>
        <dbReference type="ChEBI" id="CHEBI:30616"/>
    </ligand>
</feature>
<feature type="binding site" evidence="1">
    <location>
        <begin position="114"/>
        <end position="120"/>
    </location>
    <ligand>
        <name>ATP</name>
        <dbReference type="ChEBI" id="CHEBI:30616"/>
    </ligand>
</feature>
<feature type="binding site" evidence="1">
    <location>
        <position position="341"/>
    </location>
    <ligand>
        <name>ATP</name>
        <dbReference type="ChEBI" id="CHEBI:30616"/>
    </ligand>
</feature>
<feature type="binding site" evidence="1">
    <location>
        <position position="430"/>
    </location>
    <ligand>
        <name>Mg(2+)</name>
        <dbReference type="ChEBI" id="CHEBI:18420"/>
        <label>1</label>
        <note>catalytic</note>
    </ligand>
</feature>
<feature type="binding site" evidence="1">
    <location>
        <position position="503"/>
    </location>
    <ligand>
        <name>Mg(2+)</name>
        <dbReference type="ChEBI" id="CHEBI:18420"/>
        <label>1</label>
        <note>catalytic</note>
    </ligand>
</feature>
<feature type="binding site" evidence="1">
    <location>
        <position position="503"/>
    </location>
    <ligand>
        <name>Mg(2+)</name>
        <dbReference type="ChEBI" id="CHEBI:18420"/>
        <label>2</label>
    </ligand>
</feature>
<feature type="binding site" evidence="1">
    <location>
        <position position="505"/>
    </location>
    <ligand>
        <name>Mg(2+)</name>
        <dbReference type="ChEBI" id="CHEBI:18420"/>
        <label>2</label>
    </ligand>
</feature>
<feature type="site" description="Interaction with DNA" evidence="1">
    <location>
        <position position="455"/>
    </location>
</feature>
<feature type="site" description="Interaction with DNA" evidence="1">
    <location>
        <position position="458"/>
    </location>
</feature>
<feature type="site" description="Interaction with DNA" evidence="1">
    <location>
        <position position="510"/>
    </location>
</feature>
<feature type="site" description="Interaction with DNA" evidence="1">
    <location>
        <position position="626"/>
    </location>
</feature>
<keyword id="KW-0067">ATP-binding</keyword>
<keyword id="KW-0238">DNA-binding</keyword>
<keyword id="KW-0413">Isomerase</keyword>
<keyword id="KW-0460">Magnesium</keyword>
<keyword id="KW-0479">Metal-binding</keyword>
<keyword id="KW-0547">Nucleotide-binding</keyword>
<keyword id="KW-0799">Topoisomerase</keyword>
<gene>
    <name evidence="1" type="primary">parE</name>
    <name type="synonym">grlB</name>
</gene>
<dbReference type="EC" id="5.6.2.2" evidence="1"/>
<dbReference type="EMBL" id="L25288">
    <property type="protein sequence ID" value="AAA53115.1"/>
    <property type="molecule type" value="Genomic_DNA"/>
</dbReference>
<dbReference type="PIR" id="S54426">
    <property type="entry name" value="S54426"/>
</dbReference>
<dbReference type="RefSeq" id="WP_001548666.1">
    <property type="nucleotide sequence ID" value="NZ_WWFR01000003.1"/>
</dbReference>
<dbReference type="SMR" id="P0C1S7"/>
<dbReference type="ChEMBL" id="CHEMBL2150841"/>
<dbReference type="DrugCentral" id="P0C1S7"/>
<dbReference type="PRO" id="PR:P0C1S7"/>
<dbReference type="GO" id="GO:0005694">
    <property type="term" value="C:chromosome"/>
    <property type="evidence" value="ECO:0007669"/>
    <property type="project" value="InterPro"/>
</dbReference>
<dbReference type="GO" id="GO:0005524">
    <property type="term" value="F:ATP binding"/>
    <property type="evidence" value="ECO:0007669"/>
    <property type="project" value="UniProtKB-UniRule"/>
</dbReference>
<dbReference type="GO" id="GO:0003677">
    <property type="term" value="F:DNA binding"/>
    <property type="evidence" value="ECO:0007669"/>
    <property type="project" value="UniProtKB-UniRule"/>
</dbReference>
<dbReference type="GO" id="GO:0034335">
    <property type="term" value="F:DNA negative supercoiling activity"/>
    <property type="evidence" value="ECO:0007669"/>
    <property type="project" value="UniProtKB-ARBA"/>
</dbReference>
<dbReference type="GO" id="GO:0046872">
    <property type="term" value="F:metal ion binding"/>
    <property type="evidence" value="ECO:0007669"/>
    <property type="project" value="UniProtKB-KW"/>
</dbReference>
<dbReference type="GO" id="GO:0007059">
    <property type="term" value="P:chromosome segregation"/>
    <property type="evidence" value="ECO:0007669"/>
    <property type="project" value="UniProtKB-UniRule"/>
</dbReference>
<dbReference type="GO" id="GO:0006265">
    <property type="term" value="P:DNA topological change"/>
    <property type="evidence" value="ECO:0007669"/>
    <property type="project" value="UniProtKB-UniRule"/>
</dbReference>
<dbReference type="CDD" id="cd16928">
    <property type="entry name" value="HATPase_GyrB-like"/>
    <property type="match status" value="1"/>
</dbReference>
<dbReference type="CDD" id="cd00822">
    <property type="entry name" value="TopoII_Trans_DNA_gyrase"/>
    <property type="match status" value="1"/>
</dbReference>
<dbReference type="FunFam" id="3.30.230.10:FF:000005">
    <property type="entry name" value="DNA gyrase subunit B"/>
    <property type="match status" value="1"/>
</dbReference>
<dbReference type="FunFam" id="3.30.565.10:FF:000002">
    <property type="entry name" value="DNA gyrase subunit B"/>
    <property type="match status" value="1"/>
</dbReference>
<dbReference type="FunFam" id="3.40.50.670:FF:000002">
    <property type="entry name" value="DNA gyrase subunit B"/>
    <property type="match status" value="1"/>
</dbReference>
<dbReference type="Gene3D" id="3.30.230.10">
    <property type="match status" value="1"/>
</dbReference>
<dbReference type="Gene3D" id="3.40.50.670">
    <property type="match status" value="1"/>
</dbReference>
<dbReference type="Gene3D" id="3.30.565.10">
    <property type="entry name" value="Histidine kinase-like ATPase, C-terminal domain"/>
    <property type="match status" value="1"/>
</dbReference>
<dbReference type="HAMAP" id="MF_00939">
    <property type="entry name" value="ParE_type2"/>
    <property type="match status" value="1"/>
</dbReference>
<dbReference type="InterPro" id="IPR002288">
    <property type="entry name" value="DNA_gyrase_B_C"/>
</dbReference>
<dbReference type="InterPro" id="IPR036890">
    <property type="entry name" value="HATPase_C_sf"/>
</dbReference>
<dbReference type="InterPro" id="IPR005740">
    <property type="entry name" value="ParE_type2"/>
</dbReference>
<dbReference type="InterPro" id="IPR020568">
    <property type="entry name" value="Ribosomal_Su5_D2-typ_SF"/>
</dbReference>
<dbReference type="InterPro" id="IPR014721">
    <property type="entry name" value="Ribsml_uS5_D2-typ_fold_subgr"/>
</dbReference>
<dbReference type="InterPro" id="IPR001241">
    <property type="entry name" value="Topo_IIA"/>
</dbReference>
<dbReference type="InterPro" id="IPR013760">
    <property type="entry name" value="Topo_IIA-like_dom_sf"/>
</dbReference>
<dbReference type="InterPro" id="IPR000565">
    <property type="entry name" value="Topo_IIA_B"/>
</dbReference>
<dbReference type="InterPro" id="IPR013759">
    <property type="entry name" value="Topo_IIA_B_C"/>
</dbReference>
<dbReference type="InterPro" id="IPR013506">
    <property type="entry name" value="Topo_IIA_bsu_dom2"/>
</dbReference>
<dbReference type="InterPro" id="IPR018522">
    <property type="entry name" value="TopoIIA_CS"/>
</dbReference>
<dbReference type="InterPro" id="IPR006171">
    <property type="entry name" value="TOPRIM_dom"/>
</dbReference>
<dbReference type="NCBIfam" id="TIGR01058">
    <property type="entry name" value="parE_Gpos"/>
    <property type="match status" value="1"/>
</dbReference>
<dbReference type="NCBIfam" id="NF004189">
    <property type="entry name" value="PRK05644.1"/>
    <property type="match status" value="1"/>
</dbReference>
<dbReference type="PANTHER" id="PTHR45866">
    <property type="entry name" value="DNA GYRASE/TOPOISOMERASE SUBUNIT B"/>
    <property type="match status" value="1"/>
</dbReference>
<dbReference type="PANTHER" id="PTHR45866:SF12">
    <property type="entry name" value="DNA TOPOISOMERASE 4 SUBUNIT B"/>
    <property type="match status" value="1"/>
</dbReference>
<dbReference type="Pfam" id="PF00204">
    <property type="entry name" value="DNA_gyraseB"/>
    <property type="match status" value="1"/>
</dbReference>
<dbReference type="Pfam" id="PF00986">
    <property type="entry name" value="DNA_gyraseB_C"/>
    <property type="match status" value="1"/>
</dbReference>
<dbReference type="Pfam" id="PF02518">
    <property type="entry name" value="HATPase_c"/>
    <property type="match status" value="1"/>
</dbReference>
<dbReference type="Pfam" id="PF01751">
    <property type="entry name" value="Toprim"/>
    <property type="match status" value="1"/>
</dbReference>
<dbReference type="PRINTS" id="PR01159">
    <property type="entry name" value="DNAGYRASEB"/>
</dbReference>
<dbReference type="PRINTS" id="PR00418">
    <property type="entry name" value="TPI2FAMILY"/>
</dbReference>
<dbReference type="SMART" id="SM00387">
    <property type="entry name" value="HATPase_c"/>
    <property type="match status" value="1"/>
</dbReference>
<dbReference type="SMART" id="SM00433">
    <property type="entry name" value="TOP2c"/>
    <property type="match status" value="1"/>
</dbReference>
<dbReference type="SUPFAM" id="SSF55874">
    <property type="entry name" value="ATPase domain of HSP90 chaperone/DNA topoisomerase II/histidine kinase"/>
    <property type="match status" value="1"/>
</dbReference>
<dbReference type="SUPFAM" id="SSF54211">
    <property type="entry name" value="Ribosomal protein S5 domain 2-like"/>
    <property type="match status" value="1"/>
</dbReference>
<dbReference type="SUPFAM" id="SSF56719">
    <property type="entry name" value="Type II DNA topoisomerase"/>
    <property type="match status" value="1"/>
</dbReference>
<dbReference type="PROSITE" id="PS00177">
    <property type="entry name" value="TOPOISOMERASE_II"/>
    <property type="match status" value="1"/>
</dbReference>
<dbReference type="PROSITE" id="PS50880">
    <property type="entry name" value="TOPRIM"/>
    <property type="match status" value="1"/>
</dbReference>
<accession>P0C1S7</accession>
<accession>P0A0L0</accession>
<accession>P50072</accession>
<reference key="1">
    <citation type="journal article" date="1994" name="Mol. Microbiol.">
        <title>Cloning and primary structure of Staphylococcus aureus DNA topoisomerase IV: a primary target of fluoroquinolones.</title>
        <authorList>
            <person name="Ferrero L."/>
            <person name="Cameron B."/>
            <person name="Manse B."/>
            <person name="Lagneaux D."/>
            <person name="Crouzet J."/>
            <person name="Famechon A."/>
            <person name="Blanche F."/>
        </authorList>
    </citation>
    <scope>NUCLEOTIDE SEQUENCE [GENOMIC DNA]</scope>
    <source>
        <strain>FDA 574</strain>
    </source>
</reference>
<proteinExistence type="inferred from homology"/>
<name>PARE_STAAU</name>
<sequence>MNKQNNYSDDSIQVLEGLEAVRKRPGMYIGSTDKRGLHHLVYEIVDNSVDEVLNGYGNEIDVTINKDGSISIEDNGRGMPTGIHKSGKPTVEVIFTVLHAGGKFGQGGYKTSGGLHGVGASVVNALSEWLEVEIHRDGNIYHQSFKNGGSPSSGLVKKGKTKKTGTKVTFKPDDTIFKASTSFNFDVLSERLQESAFLLKNLKITLNDLRSGKERQEHYHYEEGIKEFVSYVNEGKEVLHDVATFSGEANGIEVDVAFQYNDQYSESILSFVNNVRTKDGGTHEVGFKTAMTRVFNDYARRINELKTKDKNLDGNDIREGLTAVVSVRIPEELLQFEGQTKSKLGTSEARSAVDSVVADKLPFYLEEKGQLSKSLVKKAIKAQQAREAARKAREDARSGKKNKRKDTLLSGKLTPAQSKNTEKNELYLVEGDSAGGSAKLGRDRKFQAILPLRGKVINTEKARLEDIFKNEEINTIIHTIGAGVGTDFKIEDSNYNRVIIMTDADTDGAHIQVLLLTFFFKYMKPLVQAGRVFIALPPLYKLEKGKGKTKRVEYAWTDEELNKLQKELGKGFTLQRYKGLGEMNPEQLWETTMNPETRTLIRVQVEDEVRSSKRVTTLMGDKVQPRREWIEKHVEFGMQEDQSILDNSEVQVLENDQFDEEEI</sequence>
<evidence type="ECO:0000255" key="1">
    <source>
        <dbReference type="HAMAP-Rule" id="MF_00939"/>
    </source>
</evidence>
<evidence type="ECO:0000256" key="2">
    <source>
        <dbReference type="SAM" id="MobiDB-lite"/>
    </source>
</evidence>
<comment type="function">
    <text evidence="1">Topoisomerase IV is essential for chromosome segregation. It relaxes supercoiled DNA. Performs the decatenation events required during the replication of a circular DNA molecule.</text>
</comment>
<comment type="catalytic activity">
    <reaction evidence="1">
        <text>ATP-dependent breakage, passage and rejoining of double-stranded DNA.</text>
        <dbReference type="EC" id="5.6.2.2"/>
    </reaction>
</comment>
<comment type="cofactor">
    <cofactor evidence="1">
        <name>Mg(2+)</name>
        <dbReference type="ChEBI" id="CHEBI:18420"/>
    </cofactor>
    <cofactor evidence="1">
        <name>Mn(2+)</name>
        <dbReference type="ChEBI" id="CHEBI:29035"/>
    </cofactor>
    <cofactor evidence="1">
        <name>Ca(2+)</name>
        <dbReference type="ChEBI" id="CHEBI:29108"/>
    </cofactor>
    <text evidence="1">Binds two Mg(2+) per subunit. The magnesium ions form salt bridges with both the protein and the DNA. Can also accept other divalent metal cations, such as Mn(2+) or Ca(2+).</text>
</comment>
<comment type="subunit">
    <text>Heterotetramer composed of ParC and ParE.</text>
</comment>
<comment type="similarity">
    <text evidence="1">Belongs to the type II topoisomerase family. ParE type 2 subfamily.</text>
</comment>
<protein>
    <recommendedName>
        <fullName evidence="1">DNA topoisomerase 4 subunit B</fullName>
        <ecNumber evidence="1">5.6.2.2</ecNumber>
    </recommendedName>
    <alternativeName>
        <fullName evidence="1">Topoisomerase IV subunit B</fullName>
    </alternativeName>
</protein>
<organism>
    <name type="scientific">Staphylococcus aureus</name>
    <dbReference type="NCBI Taxonomy" id="1280"/>
    <lineage>
        <taxon>Bacteria</taxon>
        <taxon>Bacillati</taxon>
        <taxon>Bacillota</taxon>
        <taxon>Bacilli</taxon>
        <taxon>Bacillales</taxon>
        <taxon>Staphylococcaceae</taxon>
        <taxon>Staphylococcus</taxon>
    </lineage>
</organism>